<organism>
    <name type="scientific">Akkermansia muciniphila (strain ATCC BAA-835 / DSM 22959 / JCM 33894 / BCRC 81048 / CCUG 64013 / CIP 107961 / Muc)</name>
    <dbReference type="NCBI Taxonomy" id="349741"/>
    <lineage>
        <taxon>Bacteria</taxon>
        <taxon>Pseudomonadati</taxon>
        <taxon>Verrucomicrobiota</taxon>
        <taxon>Verrucomicrobiia</taxon>
        <taxon>Verrucomicrobiales</taxon>
        <taxon>Akkermansiaceae</taxon>
        <taxon>Akkermansia</taxon>
    </lineage>
</organism>
<reference key="1">
    <citation type="journal article" date="2011" name="PLoS ONE">
        <title>The genome of Akkermansia muciniphila, a dedicated intestinal mucin degrader, and its use in exploring intestinal metagenomes.</title>
        <authorList>
            <person name="van Passel M.W."/>
            <person name="Kant R."/>
            <person name="Zoetendal E.G."/>
            <person name="Plugge C.M."/>
            <person name="Derrien M."/>
            <person name="Malfatti S.A."/>
            <person name="Chain P.S."/>
            <person name="Woyke T."/>
            <person name="Palva A."/>
            <person name="de Vos W.M."/>
            <person name="Smidt H."/>
        </authorList>
    </citation>
    <scope>NUCLEOTIDE SEQUENCE [LARGE SCALE GENOMIC DNA]</scope>
    <source>
        <strain>ATCC BAA-835 / DSM 22959 / JCM 33894 / BCRC 81048 / CCUG 64013 / CIP 107961 / Muc</strain>
    </source>
</reference>
<protein>
    <recommendedName>
        <fullName evidence="1">Large ribosomal subunit protein uL22</fullName>
    </recommendedName>
    <alternativeName>
        <fullName evidence="2">50S ribosomal protein L22</fullName>
    </alternativeName>
</protein>
<evidence type="ECO:0000255" key="1">
    <source>
        <dbReference type="HAMAP-Rule" id="MF_01331"/>
    </source>
</evidence>
<evidence type="ECO:0000305" key="2"/>
<sequence>MEVKAVYKYARISAKKMRDVAQEIQGLSVSQATDILSYTPKKGAYLLNKTLKSALANAENNAELSVDTLVVKSVMVDEGPTMRRTMPRARGSANMIRKRTSHITVILADQEG</sequence>
<name>RL22_AKKM8</name>
<accession>B2UMT4</accession>
<comment type="function">
    <text evidence="1">This protein binds specifically to 23S rRNA; its binding is stimulated by other ribosomal proteins, e.g. L4, L17, and L20. It is important during the early stages of 50S assembly. It makes multiple contacts with different domains of the 23S rRNA in the assembled 50S subunit and ribosome (By similarity).</text>
</comment>
<comment type="function">
    <text evidence="1">The globular domain of the protein is located near the polypeptide exit tunnel on the outside of the subunit, while an extended beta-hairpin is found that lines the wall of the exit tunnel in the center of the 70S ribosome.</text>
</comment>
<comment type="subunit">
    <text evidence="1">Part of the 50S ribosomal subunit.</text>
</comment>
<comment type="similarity">
    <text evidence="1">Belongs to the universal ribosomal protein uL22 family.</text>
</comment>
<proteinExistence type="inferred from homology"/>
<keyword id="KW-1185">Reference proteome</keyword>
<keyword id="KW-0687">Ribonucleoprotein</keyword>
<keyword id="KW-0689">Ribosomal protein</keyword>
<keyword id="KW-0694">RNA-binding</keyword>
<keyword id="KW-0699">rRNA-binding</keyword>
<feature type="chain" id="PRO_1000166037" description="Large ribosomal subunit protein uL22">
    <location>
        <begin position="1"/>
        <end position="112"/>
    </location>
</feature>
<dbReference type="EMBL" id="CP001071">
    <property type="protein sequence ID" value="ACD04140.1"/>
    <property type="molecule type" value="Genomic_DNA"/>
</dbReference>
<dbReference type="RefSeq" id="WP_012419355.1">
    <property type="nucleotide sequence ID" value="NZ_CP071807.1"/>
</dbReference>
<dbReference type="SMR" id="B2UMT4"/>
<dbReference type="STRING" id="349741.Amuc_0298"/>
<dbReference type="PaxDb" id="349741-Amuc_0298"/>
<dbReference type="GeneID" id="60879776"/>
<dbReference type="KEGG" id="amu:Amuc_0298"/>
<dbReference type="eggNOG" id="COG0091">
    <property type="taxonomic scope" value="Bacteria"/>
</dbReference>
<dbReference type="HOGENOM" id="CLU_083987_3_3_0"/>
<dbReference type="OrthoDB" id="9805969at2"/>
<dbReference type="BioCyc" id="AMUC349741:G1GBX-340-MONOMER"/>
<dbReference type="Proteomes" id="UP000001031">
    <property type="component" value="Chromosome"/>
</dbReference>
<dbReference type="GO" id="GO:0022625">
    <property type="term" value="C:cytosolic large ribosomal subunit"/>
    <property type="evidence" value="ECO:0007669"/>
    <property type="project" value="TreeGrafter"/>
</dbReference>
<dbReference type="GO" id="GO:0019843">
    <property type="term" value="F:rRNA binding"/>
    <property type="evidence" value="ECO:0007669"/>
    <property type="project" value="UniProtKB-UniRule"/>
</dbReference>
<dbReference type="GO" id="GO:0003735">
    <property type="term" value="F:structural constituent of ribosome"/>
    <property type="evidence" value="ECO:0007669"/>
    <property type="project" value="InterPro"/>
</dbReference>
<dbReference type="GO" id="GO:0006412">
    <property type="term" value="P:translation"/>
    <property type="evidence" value="ECO:0007669"/>
    <property type="project" value="UniProtKB-UniRule"/>
</dbReference>
<dbReference type="CDD" id="cd00336">
    <property type="entry name" value="Ribosomal_L22"/>
    <property type="match status" value="1"/>
</dbReference>
<dbReference type="Gene3D" id="3.90.470.10">
    <property type="entry name" value="Ribosomal protein L22/L17"/>
    <property type="match status" value="1"/>
</dbReference>
<dbReference type="HAMAP" id="MF_01331_B">
    <property type="entry name" value="Ribosomal_uL22_B"/>
    <property type="match status" value="1"/>
</dbReference>
<dbReference type="InterPro" id="IPR001063">
    <property type="entry name" value="Ribosomal_uL22"/>
</dbReference>
<dbReference type="InterPro" id="IPR005727">
    <property type="entry name" value="Ribosomal_uL22_bac/chlpt-type"/>
</dbReference>
<dbReference type="InterPro" id="IPR047867">
    <property type="entry name" value="Ribosomal_uL22_bac/org-type"/>
</dbReference>
<dbReference type="InterPro" id="IPR018260">
    <property type="entry name" value="Ribosomal_uL22_CS"/>
</dbReference>
<dbReference type="InterPro" id="IPR036394">
    <property type="entry name" value="Ribosomal_uL22_sf"/>
</dbReference>
<dbReference type="NCBIfam" id="TIGR01044">
    <property type="entry name" value="rplV_bact"/>
    <property type="match status" value="1"/>
</dbReference>
<dbReference type="PANTHER" id="PTHR13501">
    <property type="entry name" value="CHLOROPLAST 50S RIBOSOMAL PROTEIN L22-RELATED"/>
    <property type="match status" value="1"/>
</dbReference>
<dbReference type="PANTHER" id="PTHR13501:SF8">
    <property type="entry name" value="LARGE RIBOSOMAL SUBUNIT PROTEIN UL22M"/>
    <property type="match status" value="1"/>
</dbReference>
<dbReference type="Pfam" id="PF00237">
    <property type="entry name" value="Ribosomal_L22"/>
    <property type="match status" value="1"/>
</dbReference>
<dbReference type="SUPFAM" id="SSF54843">
    <property type="entry name" value="Ribosomal protein L22"/>
    <property type="match status" value="1"/>
</dbReference>
<dbReference type="PROSITE" id="PS00464">
    <property type="entry name" value="RIBOSOMAL_L22"/>
    <property type="match status" value="1"/>
</dbReference>
<gene>
    <name evidence="1" type="primary">rplV</name>
    <name type="ordered locus">Amuc_0298</name>
</gene>